<organism>
    <name type="scientific">Sulfurovum sp. (strain NBC37-1)</name>
    <dbReference type="NCBI Taxonomy" id="387093"/>
    <lineage>
        <taxon>Bacteria</taxon>
        <taxon>Pseudomonadati</taxon>
        <taxon>Campylobacterota</taxon>
        <taxon>Epsilonproteobacteria</taxon>
        <taxon>Campylobacterales</taxon>
        <taxon>Sulfurovaceae</taxon>
        <taxon>Sulfurovum</taxon>
    </lineage>
</organism>
<accession>A6Q6Q7</accession>
<gene>
    <name evidence="1" type="primary">mnmG</name>
    <name evidence="1" type="synonym">gidA</name>
    <name type="ordered locus">SUN_0206</name>
</gene>
<protein>
    <recommendedName>
        <fullName evidence="1">tRNA uridine 5-carboxymethylaminomethyl modification enzyme MnmG</fullName>
    </recommendedName>
    <alternativeName>
        <fullName evidence="1">Glucose-inhibited division protein A</fullName>
    </alternativeName>
</protein>
<reference key="1">
    <citation type="journal article" date="2007" name="Proc. Natl. Acad. Sci. U.S.A.">
        <title>Deep-sea vent epsilon-proteobacterial genomes provide insights into emergence of pathogens.</title>
        <authorList>
            <person name="Nakagawa S."/>
            <person name="Takaki Y."/>
            <person name="Shimamura S."/>
            <person name="Reysenbach A.-L."/>
            <person name="Takai K."/>
            <person name="Horikoshi K."/>
        </authorList>
    </citation>
    <scope>NUCLEOTIDE SEQUENCE [LARGE SCALE GENOMIC DNA]</scope>
    <source>
        <strain>NBC37-1</strain>
    </source>
</reference>
<keyword id="KW-0963">Cytoplasm</keyword>
<keyword id="KW-0274">FAD</keyword>
<keyword id="KW-0285">Flavoprotein</keyword>
<keyword id="KW-0520">NAD</keyword>
<keyword id="KW-0819">tRNA processing</keyword>
<dbReference type="EMBL" id="AP009179">
    <property type="protein sequence ID" value="BAF71166.1"/>
    <property type="molecule type" value="Genomic_DNA"/>
</dbReference>
<dbReference type="RefSeq" id="WP_011979899.1">
    <property type="nucleotide sequence ID" value="NC_009663.1"/>
</dbReference>
<dbReference type="SMR" id="A6Q6Q7"/>
<dbReference type="STRING" id="387093.SUN_0206"/>
<dbReference type="KEGG" id="sun:SUN_0206"/>
<dbReference type="eggNOG" id="COG0445">
    <property type="taxonomic scope" value="Bacteria"/>
</dbReference>
<dbReference type="HOGENOM" id="CLU_007831_2_2_7"/>
<dbReference type="OrthoDB" id="9815560at2"/>
<dbReference type="Proteomes" id="UP000006378">
    <property type="component" value="Chromosome"/>
</dbReference>
<dbReference type="GO" id="GO:0005829">
    <property type="term" value="C:cytosol"/>
    <property type="evidence" value="ECO:0007669"/>
    <property type="project" value="TreeGrafter"/>
</dbReference>
<dbReference type="GO" id="GO:0050660">
    <property type="term" value="F:flavin adenine dinucleotide binding"/>
    <property type="evidence" value="ECO:0007669"/>
    <property type="project" value="UniProtKB-UniRule"/>
</dbReference>
<dbReference type="GO" id="GO:0030488">
    <property type="term" value="P:tRNA methylation"/>
    <property type="evidence" value="ECO:0007669"/>
    <property type="project" value="TreeGrafter"/>
</dbReference>
<dbReference type="GO" id="GO:0002098">
    <property type="term" value="P:tRNA wobble uridine modification"/>
    <property type="evidence" value="ECO:0007669"/>
    <property type="project" value="InterPro"/>
</dbReference>
<dbReference type="FunFam" id="1.10.150.570:FF:000001">
    <property type="entry name" value="tRNA uridine 5-carboxymethylaminomethyl modification enzyme MnmG"/>
    <property type="match status" value="1"/>
</dbReference>
<dbReference type="FunFam" id="3.50.50.60:FF:000002">
    <property type="entry name" value="tRNA uridine 5-carboxymethylaminomethyl modification enzyme MnmG"/>
    <property type="match status" value="1"/>
</dbReference>
<dbReference type="Gene3D" id="3.50.50.60">
    <property type="entry name" value="FAD/NAD(P)-binding domain"/>
    <property type="match status" value="2"/>
</dbReference>
<dbReference type="Gene3D" id="1.10.150.570">
    <property type="entry name" value="GidA associated domain, C-terminal subdomain"/>
    <property type="match status" value="1"/>
</dbReference>
<dbReference type="Gene3D" id="1.10.10.1800">
    <property type="entry name" value="tRNA uridine 5-carboxymethylaminomethyl modification enzyme MnmG/GidA"/>
    <property type="match status" value="1"/>
</dbReference>
<dbReference type="HAMAP" id="MF_00129">
    <property type="entry name" value="MnmG_GidA"/>
    <property type="match status" value="1"/>
</dbReference>
<dbReference type="InterPro" id="IPR036188">
    <property type="entry name" value="FAD/NAD-bd_sf"/>
</dbReference>
<dbReference type="InterPro" id="IPR049312">
    <property type="entry name" value="GIDA_C_N"/>
</dbReference>
<dbReference type="InterPro" id="IPR004416">
    <property type="entry name" value="MnmG"/>
</dbReference>
<dbReference type="InterPro" id="IPR002218">
    <property type="entry name" value="MnmG-rel"/>
</dbReference>
<dbReference type="InterPro" id="IPR020595">
    <property type="entry name" value="MnmG-rel_CS"/>
</dbReference>
<dbReference type="InterPro" id="IPR026904">
    <property type="entry name" value="MnmG_C"/>
</dbReference>
<dbReference type="InterPro" id="IPR047001">
    <property type="entry name" value="MnmG_C_subdom"/>
</dbReference>
<dbReference type="InterPro" id="IPR044920">
    <property type="entry name" value="MnmG_C_subdom_sf"/>
</dbReference>
<dbReference type="InterPro" id="IPR040131">
    <property type="entry name" value="MnmG_N"/>
</dbReference>
<dbReference type="NCBIfam" id="TIGR00136">
    <property type="entry name" value="mnmG_gidA"/>
    <property type="match status" value="1"/>
</dbReference>
<dbReference type="PANTHER" id="PTHR11806">
    <property type="entry name" value="GLUCOSE INHIBITED DIVISION PROTEIN A"/>
    <property type="match status" value="1"/>
</dbReference>
<dbReference type="PANTHER" id="PTHR11806:SF0">
    <property type="entry name" value="PROTEIN MTO1 HOMOLOG, MITOCHONDRIAL"/>
    <property type="match status" value="1"/>
</dbReference>
<dbReference type="Pfam" id="PF01134">
    <property type="entry name" value="GIDA"/>
    <property type="match status" value="1"/>
</dbReference>
<dbReference type="Pfam" id="PF21680">
    <property type="entry name" value="GIDA_C_1st"/>
    <property type="match status" value="1"/>
</dbReference>
<dbReference type="Pfam" id="PF13932">
    <property type="entry name" value="SAM_GIDA_C"/>
    <property type="match status" value="1"/>
</dbReference>
<dbReference type="PRINTS" id="PR00411">
    <property type="entry name" value="PNDRDTASEI"/>
</dbReference>
<dbReference type="SMART" id="SM01228">
    <property type="entry name" value="GIDA_assoc_3"/>
    <property type="match status" value="1"/>
</dbReference>
<dbReference type="SUPFAM" id="SSF51905">
    <property type="entry name" value="FAD/NAD(P)-binding domain"/>
    <property type="match status" value="1"/>
</dbReference>
<dbReference type="PROSITE" id="PS01280">
    <property type="entry name" value="GIDA_1"/>
    <property type="match status" value="1"/>
</dbReference>
<dbReference type="PROSITE" id="PS01281">
    <property type="entry name" value="GIDA_2"/>
    <property type="match status" value="1"/>
</dbReference>
<comment type="function">
    <text evidence="1">NAD-binding protein involved in the addition of a carboxymethylaminomethyl (cmnm) group at the wobble position (U34) of certain tRNAs, forming tRNA-cmnm(5)s(2)U34.</text>
</comment>
<comment type="cofactor">
    <cofactor evidence="1">
        <name>FAD</name>
        <dbReference type="ChEBI" id="CHEBI:57692"/>
    </cofactor>
</comment>
<comment type="subunit">
    <text evidence="1">Homodimer. Heterotetramer of two MnmE and two MnmG subunits.</text>
</comment>
<comment type="subcellular location">
    <subcellularLocation>
        <location evidence="1">Cytoplasm</location>
    </subcellularLocation>
</comment>
<comment type="similarity">
    <text evidence="1">Belongs to the MnmG family.</text>
</comment>
<name>MNMG_SULNB</name>
<evidence type="ECO:0000255" key="1">
    <source>
        <dbReference type="HAMAP-Rule" id="MF_00129"/>
    </source>
</evidence>
<proteinExistence type="inferred from homology"/>
<feature type="chain" id="PRO_0000345343" description="tRNA uridine 5-carboxymethylaminomethyl modification enzyme MnmG">
    <location>
        <begin position="1"/>
        <end position="623"/>
    </location>
</feature>
<feature type="binding site" evidence="1">
    <location>
        <begin position="9"/>
        <end position="14"/>
    </location>
    <ligand>
        <name>FAD</name>
        <dbReference type="ChEBI" id="CHEBI:57692"/>
    </ligand>
</feature>
<feature type="binding site" evidence="1">
    <location>
        <begin position="270"/>
        <end position="284"/>
    </location>
    <ligand>
        <name>NAD(+)</name>
        <dbReference type="ChEBI" id="CHEBI:57540"/>
    </ligand>
</feature>
<sequence>MNYDVIVIGGGHAGIEASLASARMGVKTLLITILAEQIGASSCNPAIGGLAKGHLVREVDALGGEMGLCTDATGIQFRTLNASKGPAVRGSRAQIDMDEYRIYMRNVVLNTENLDVKQEIADGLIVEEGEVKGVTTQLGNRYTASKVIITAGTFLNGLIHIGDKKQTAGRQGEFASVELAEYLKGLGLNIGRLKTGTCARIDAKSVDTSVMEVQPGDTPPPPFSFRTDKSTFNPKQLPCYVAYTNERTHEIIESNFYRAPMFSGQIEGVGPRYCPSIEDKINRFRDRPRHQIFVEPQTIDETEYYINGMSTSLPIDVQLEMVRSVEGMKNAKIVRYGYAIEYDYVDPTELKHTLETKKIKGLYTAGQINGTTGYEEAAAQGLMAGINAALSIQGKEALILRRDEAYIGVLIDDLVTKGTKEPYRMFTSRAEYRLLLREDNADMRLSKYGKELGLLDDAYIAKFEEKQKNIEEALNYLQENYVTPTKEFLAKLEAIGAVKINDRTCWIDVIGRGDFNRDKLVSLLPEFDKYDDEVMGQILVEAKYSRYIEKQQMQIDQMKDMLKIKIPEDFTYKNVSGLSNEIVEKLEKANPTTLFAASEISGVTPAALEIIHVYIKMSQKGKI</sequence>